<reference key="1">
    <citation type="submission" date="2004-10" db="EMBL/GenBank/DDBJ databases">
        <title>Cloning and expression analysis of Mx cDNA from the sole fish Solea senegalensis.</title>
        <authorList>
            <person name="Fernandez-Trujillo M.A."/>
            <person name="Bejar J."/>
            <person name="Porta J."/>
            <person name="Borrego J.J."/>
            <person name="Alvarez M.C."/>
        </authorList>
    </citation>
    <scope>NUCLEOTIDE SEQUENCE [MRNA]</scope>
</reference>
<evidence type="ECO:0000250" key="1"/>
<evidence type="ECO:0000255" key="2"/>
<evidence type="ECO:0000255" key="3">
    <source>
        <dbReference type="PROSITE-ProRule" id="PRU00720"/>
    </source>
</evidence>
<evidence type="ECO:0000255" key="4">
    <source>
        <dbReference type="PROSITE-ProRule" id="PRU01055"/>
    </source>
</evidence>
<evidence type="ECO:0000256" key="5">
    <source>
        <dbReference type="SAM" id="MobiDB-lite"/>
    </source>
</evidence>
<feature type="chain" id="PRO_0000292877" description="Interferon-induced GTP-binding protein Mx">
    <location>
        <begin position="1"/>
        <end position="623"/>
    </location>
</feature>
<feature type="domain" description="Dynamin-type G" evidence="4">
    <location>
        <begin position="30"/>
        <end position="303"/>
    </location>
</feature>
<feature type="domain" description="GED" evidence="3">
    <location>
        <begin position="537"/>
        <end position="623"/>
    </location>
</feature>
<feature type="region of interest" description="G1 motif" evidence="4">
    <location>
        <begin position="40"/>
        <end position="47"/>
    </location>
</feature>
<feature type="region of interest" description="G2 motif" evidence="4">
    <location>
        <begin position="65"/>
        <end position="67"/>
    </location>
</feature>
<feature type="region of interest" description="G3 motif" evidence="4">
    <location>
        <begin position="141"/>
        <end position="144"/>
    </location>
</feature>
<feature type="region of interest" description="G4 motif" evidence="4">
    <location>
        <begin position="210"/>
        <end position="213"/>
    </location>
</feature>
<feature type="region of interest" description="G5 motif" evidence="4">
    <location>
        <begin position="242"/>
        <end position="245"/>
    </location>
</feature>
<feature type="region of interest" description="Disordered" evidence="5">
    <location>
        <begin position="504"/>
        <end position="527"/>
    </location>
</feature>
<feature type="compositionally biased region" description="Basic and acidic residues" evidence="5">
    <location>
        <begin position="506"/>
        <end position="519"/>
    </location>
</feature>
<feature type="binding site" evidence="2">
    <location>
        <begin position="40"/>
        <end position="47"/>
    </location>
    <ligand>
        <name>GTP</name>
        <dbReference type="ChEBI" id="CHEBI:37565"/>
    </ligand>
</feature>
<feature type="binding site" evidence="2">
    <location>
        <begin position="141"/>
        <end position="145"/>
    </location>
    <ligand>
        <name>GTP</name>
        <dbReference type="ChEBI" id="CHEBI:37565"/>
    </ligand>
</feature>
<feature type="binding site" evidence="2">
    <location>
        <begin position="210"/>
        <end position="213"/>
    </location>
    <ligand>
        <name>GTP</name>
        <dbReference type="ChEBI" id="CHEBI:37565"/>
    </ligand>
</feature>
<protein>
    <recommendedName>
        <fullName>Interferon-induced GTP-binding protein Mx</fullName>
    </recommendedName>
    <alternativeName>
        <fullName>Interferon-inducible Mx protein</fullName>
    </alternativeName>
</protein>
<gene>
    <name type="primary">mx</name>
</gene>
<comment type="subcellular location">
    <subcellularLocation>
        <location evidence="1">Cytoplasm</location>
    </subcellularLocation>
</comment>
<comment type="induction">
    <text>By interferons.</text>
</comment>
<comment type="similarity">
    <text evidence="4">Belongs to the TRAFAC class dynamin-like GTPase superfamily. Dynamin/Fzo/YdjA family.</text>
</comment>
<name>MX_SOLSE</name>
<proteinExistence type="evidence at transcript level"/>
<keyword id="KW-0963">Cytoplasm</keyword>
<keyword id="KW-0342">GTP-binding</keyword>
<keyword id="KW-0547">Nucleotide-binding</keyword>
<accession>Q5U752</accession>
<dbReference type="EMBL" id="AY790537">
    <property type="protein sequence ID" value="AAV49303.1"/>
    <property type="molecule type" value="mRNA"/>
</dbReference>
<dbReference type="SMR" id="Q5U752"/>
<dbReference type="GO" id="GO:0005737">
    <property type="term" value="C:cytoplasm"/>
    <property type="evidence" value="ECO:0007669"/>
    <property type="project" value="UniProtKB-SubCell"/>
</dbReference>
<dbReference type="GO" id="GO:0005874">
    <property type="term" value="C:microtubule"/>
    <property type="evidence" value="ECO:0007669"/>
    <property type="project" value="TreeGrafter"/>
</dbReference>
<dbReference type="GO" id="GO:0005634">
    <property type="term" value="C:nucleus"/>
    <property type="evidence" value="ECO:0007669"/>
    <property type="project" value="TreeGrafter"/>
</dbReference>
<dbReference type="GO" id="GO:0005886">
    <property type="term" value="C:plasma membrane"/>
    <property type="evidence" value="ECO:0007669"/>
    <property type="project" value="TreeGrafter"/>
</dbReference>
<dbReference type="GO" id="GO:0098793">
    <property type="term" value="C:presynapse"/>
    <property type="evidence" value="ECO:0007669"/>
    <property type="project" value="GOC"/>
</dbReference>
<dbReference type="GO" id="GO:0005525">
    <property type="term" value="F:GTP binding"/>
    <property type="evidence" value="ECO:0007669"/>
    <property type="project" value="UniProtKB-KW"/>
</dbReference>
<dbReference type="GO" id="GO:0003924">
    <property type="term" value="F:GTPase activity"/>
    <property type="evidence" value="ECO:0007669"/>
    <property type="project" value="InterPro"/>
</dbReference>
<dbReference type="GO" id="GO:0008017">
    <property type="term" value="F:microtubule binding"/>
    <property type="evidence" value="ECO:0007669"/>
    <property type="project" value="TreeGrafter"/>
</dbReference>
<dbReference type="GO" id="GO:0051607">
    <property type="term" value="P:defense response to virus"/>
    <property type="evidence" value="ECO:0007669"/>
    <property type="project" value="TreeGrafter"/>
</dbReference>
<dbReference type="GO" id="GO:0031623">
    <property type="term" value="P:receptor internalization"/>
    <property type="evidence" value="ECO:0007669"/>
    <property type="project" value="TreeGrafter"/>
</dbReference>
<dbReference type="GO" id="GO:0016185">
    <property type="term" value="P:synaptic vesicle budding from presynaptic endocytic zone membrane"/>
    <property type="evidence" value="ECO:0007669"/>
    <property type="project" value="TreeGrafter"/>
</dbReference>
<dbReference type="CDD" id="cd08771">
    <property type="entry name" value="DLP_1"/>
    <property type="match status" value="1"/>
</dbReference>
<dbReference type="FunFam" id="1.20.120.1240:FF:000007">
    <property type="entry name" value="Interferon-induced GTP-binding protein Mx1"/>
    <property type="match status" value="1"/>
</dbReference>
<dbReference type="FunFam" id="3.40.50.300:FF:000621">
    <property type="entry name" value="Interferon-induced GTP-binding protein Mx1"/>
    <property type="match status" value="1"/>
</dbReference>
<dbReference type="Gene3D" id="1.20.120.1240">
    <property type="entry name" value="Dynamin, middle domain"/>
    <property type="match status" value="1"/>
</dbReference>
<dbReference type="Gene3D" id="3.40.50.300">
    <property type="entry name" value="P-loop containing nucleotide triphosphate hydrolases"/>
    <property type="match status" value="1"/>
</dbReference>
<dbReference type="InterPro" id="IPR022812">
    <property type="entry name" value="Dynamin"/>
</dbReference>
<dbReference type="InterPro" id="IPR001401">
    <property type="entry name" value="Dynamin_GTPase"/>
</dbReference>
<dbReference type="InterPro" id="IPR019762">
    <property type="entry name" value="Dynamin_GTPase_CS"/>
</dbReference>
<dbReference type="InterPro" id="IPR045063">
    <property type="entry name" value="Dynamin_N"/>
</dbReference>
<dbReference type="InterPro" id="IPR000375">
    <property type="entry name" value="Dynamin_stalk"/>
</dbReference>
<dbReference type="InterPro" id="IPR030381">
    <property type="entry name" value="G_DYNAMIN_dom"/>
</dbReference>
<dbReference type="InterPro" id="IPR003130">
    <property type="entry name" value="GED"/>
</dbReference>
<dbReference type="InterPro" id="IPR020850">
    <property type="entry name" value="GED_dom"/>
</dbReference>
<dbReference type="InterPro" id="IPR027417">
    <property type="entry name" value="P-loop_NTPase"/>
</dbReference>
<dbReference type="PANTHER" id="PTHR11566">
    <property type="entry name" value="DYNAMIN"/>
    <property type="match status" value="1"/>
</dbReference>
<dbReference type="PANTHER" id="PTHR11566:SF225">
    <property type="entry name" value="INTERFERON-INDUCED GTP-BINDING PROTEIN MX-RELATED"/>
    <property type="match status" value="1"/>
</dbReference>
<dbReference type="Pfam" id="PF01031">
    <property type="entry name" value="Dynamin_M"/>
    <property type="match status" value="1"/>
</dbReference>
<dbReference type="Pfam" id="PF00350">
    <property type="entry name" value="Dynamin_N"/>
    <property type="match status" value="1"/>
</dbReference>
<dbReference type="Pfam" id="PF02212">
    <property type="entry name" value="GED"/>
    <property type="match status" value="1"/>
</dbReference>
<dbReference type="PRINTS" id="PR00195">
    <property type="entry name" value="DYNAMIN"/>
</dbReference>
<dbReference type="SMART" id="SM00053">
    <property type="entry name" value="DYNc"/>
    <property type="match status" value="1"/>
</dbReference>
<dbReference type="SMART" id="SM00302">
    <property type="entry name" value="GED"/>
    <property type="match status" value="1"/>
</dbReference>
<dbReference type="SUPFAM" id="SSF52540">
    <property type="entry name" value="P-loop containing nucleoside triphosphate hydrolases"/>
    <property type="match status" value="1"/>
</dbReference>
<dbReference type="PROSITE" id="PS00410">
    <property type="entry name" value="G_DYNAMIN_1"/>
    <property type="match status" value="1"/>
</dbReference>
<dbReference type="PROSITE" id="PS51718">
    <property type="entry name" value="G_DYNAMIN_2"/>
    <property type="match status" value="1"/>
</dbReference>
<dbReference type="PROSITE" id="PS51388">
    <property type="entry name" value="GED"/>
    <property type="match status" value="1"/>
</dbReference>
<organism>
    <name type="scientific">Solea senegalensis</name>
    <name type="common">Senegalese sole</name>
    <dbReference type="NCBI Taxonomy" id="28829"/>
    <lineage>
        <taxon>Eukaryota</taxon>
        <taxon>Metazoa</taxon>
        <taxon>Chordata</taxon>
        <taxon>Craniata</taxon>
        <taxon>Vertebrata</taxon>
        <taxon>Euteleostomi</taxon>
        <taxon>Actinopterygii</taxon>
        <taxon>Neopterygii</taxon>
        <taxon>Teleostei</taxon>
        <taxon>Neoteleostei</taxon>
        <taxon>Acanthomorphata</taxon>
        <taxon>Carangaria</taxon>
        <taxon>Pleuronectiformes</taxon>
        <taxon>Pleuronectoidei</taxon>
        <taxon>Soleidae</taxon>
        <taxon>Solea</taxon>
    </lineage>
</organism>
<sequence length="623" mass="71066">MTNLNEQYEEKVRPCIDLIDSLRSLGVEKDLALPAIAVIGDQSSGKSSVLEALSGVALPRGSGIVTRCPLELKMKRKNDGEGWQGKISYQDHEEEIQDPADVEKKIEEAQIQIAGVGVGISENMISLEIASPDVPDLTLIDLPGITRVAVHGQPVNIGEQIKKLIHKFITKQETICLVVHACNVDLATTEALQMAQEEDPEGERTLGILTKPDLVDKGTEQMVIDILQNEVIHLKKGYMIVRCRGQQEIMQKVSLAEAIEREKAFFADHAHFCSLYDDGQATVPRLAEKLTLELVHHIEKSLPRLEEQIEEKLEQAQAELVRYGTGPPSDAAERLYFLIDKVTAFTQDTISLAAGEELRCGEKLNIFSALRREFDKWSIHLSHTGQKFNARIDKEVAIYEDKYRGRELPGFINYKTFEVMVKEQIKQLEEPAVKKLRDIADAVRKLFLQLAQCSFTGFPNLVKTAKAKIETIKLERESTAESMLRTQFKMEMIVYSQDRTYSNSLSDRKKEESEEEERRKGPKLHKERNCMDNHATLQELMLHLKSYYNIASQRLADQVPMVIRYQMLQESAVQLQRQMMQMMQDKENMEFLLKEDLNIGCKRATLQSRIKRLMKARAYLMEF</sequence>